<name>RLMM_SHEHH</name>
<protein>
    <recommendedName>
        <fullName evidence="1">Ribosomal RNA large subunit methyltransferase M</fullName>
        <ecNumber evidence="1">2.1.1.186</ecNumber>
    </recommendedName>
    <alternativeName>
        <fullName evidence="1">23S rRNA (cytidine2498-2'-O)-methyltransferase</fullName>
    </alternativeName>
    <alternativeName>
        <fullName evidence="1">23S rRNA 2'-O-ribose methyltransferase RlmM</fullName>
    </alternativeName>
</protein>
<gene>
    <name evidence="1" type="primary">rlmM</name>
    <name type="ordered locus">Shal_3070</name>
</gene>
<feature type="chain" id="PRO_1000087740" description="Ribosomal RNA large subunit methyltransferase M">
    <location>
        <begin position="1"/>
        <end position="360"/>
    </location>
</feature>
<feature type="active site" description="Proton acceptor" evidence="1">
    <location>
        <position position="305"/>
    </location>
</feature>
<feature type="binding site" evidence="1">
    <location>
        <position position="187"/>
    </location>
    <ligand>
        <name>S-adenosyl-L-methionine</name>
        <dbReference type="ChEBI" id="CHEBI:59789"/>
    </ligand>
</feature>
<feature type="binding site" evidence="1">
    <location>
        <begin position="220"/>
        <end position="223"/>
    </location>
    <ligand>
        <name>S-adenosyl-L-methionine</name>
        <dbReference type="ChEBI" id="CHEBI:59789"/>
    </ligand>
</feature>
<feature type="binding site" evidence="1">
    <location>
        <position position="239"/>
    </location>
    <ligand>
        <name>S-adenosyl-L-methionine</name>
        <dbReference type="ChEBI" id="CHEBI:59789"/>
    </ligand>
</feature>
<feature type="binding site" evidence="1">
    <location>
        <position position="259"/>
    </location>
    <ligand>
        <name>S-adenosyl-L-methionine</name>
        <dbReference type="ChEBI" id="CHEBI:59789"/>
    </ligand>
</feature>
<feature type="binding site" evidence="1">
    <location>
        <position position="276"/>
    </location>
    <ligand>
        <name>S-adenosyl-L-methionine</name>
        <dbReference type="ChEBI" id="CHEBI:59789"/>
    </ligand>
</feature>
<dbReference type="EC" id="2.1.1.186" evidence="1"/>
<dbReference type="EMBL" id="CP000931">
    <property type="protein sequence ID" value="ABZ77618.1"/>
    <property type="molecule type" value="Genomic_DNA"/>
</dbReference>
<dbReference type="RefSeq" id="WP_012278144.1">
    <property type="nucleotide sequence ID" value="NC_010334.1"/>
</dbReference>
<dbReference type="SMR" id="B0TPH1"/>
<dbReference type="STRING" id="458817.Shal_3070"/>
<dbReference type="KEGG" id="shl:Shal_3070"/>
<dbReference type="eggNOG" id="COG2933">
    <property type="taxonomic scope" value="Bacteria"/>
</dbReference>
<dbReference type="HOGENOM" id="CLU_043780_0_0_6"/>
<dbReference type="OrthoDB" id="154490at2"/>
<dbReference type="Proteomes" id="UP000001317">
    <property type="component" value="Chromosome"/>
</dbReference>
<dbReference type="GO" id="GO:0005737">
    <property type="term" value="C:cytoplasm"/>
    <property type="evidence" value="ECO:0007669"/>
    <property type="project" value="UniProtKB-SubCell"/>
</dbReference>
<dbReference type="GO" id="GO:0008757">
    <property type="term" value="F:S-adenosylmethionine-dependent methyltransferase activity"/>
    <property type="evidence" value="ECO:0007669"/>
    <property type="project" value="UniProtKB-UniRule"/>
</dbReference>
<dbReference type="GO" id="GO:0032259">
    <property type="term" value="P:methylation"/>
    <property type="evidence" value="ECO:0007669"/>
    <property type="project" value="UniProtKB-KW"/>
</dbReference>
<dbReference type="GO" id="GO:0006364">
    <property type="term" value="P:rRNA processing"/>
    <property type="evidence" value="ECO:0007669"/>
    <property type="project" value="UniProtKB-UniRule"/>
</dbReference>
<dbReference type="Gene3D" id="3.30.2300.20">
    <property type="match status" value="1"/>
</dbReference>
<dbReference type="Gene3D" id="3.30.70.2810">
    <property type="match status" value="1"/>
</dbReference>
<dbReference type="Gene3D" id="3.40.50.150">
    <property type="entry name" value="Vaccinia Virus protein VP39"/>
    <property type="match status" value="1"/>
</dbReference>
<dbReference type="HAMAP" id="MF_01551">
    <property type="entry name" value="23SrRNA_methyltr_M"/>
    <property type="match status" value="1"/>
</dbReference>
<dbReference type="InterPro" id="IPR040739">
    <property type="entry name" value="RlmM_FDX"/>
</dbReference>
<dbReference type="InterPro" id="IPR048646">
    <property type="entry name" value="RlmM_THUMP-like"/>
</dbReference>
<dbReference type="InterPro" id="IPR002877">
    <property type="entry name" value="RNA_MeTrfase_FtsJ_dom"/>
</dbReference>
<dbReference type="InterPro" id="IPR011224">
    <property type="entry name" value="rRNA_MeTrfase_M"/>
</dbReference>
<dbReference type="InterPro" id="IPR029063">
    <property type="entry name" value="SAM-dependent_MTases_sf"/>
</dbReference>
<dbReference type="NCBIfam" id="NF008734">
    <property type="entry name" value="PRK11760.1"/>
    <property type="match status" value="1"/>
</dbReference>
<dbReference type="PANTHER" id="PTHR37524">
    <property type="entry name" value="RIBOSOMAL RNA LARGE SUBUNIT METHYLTRANSFERASE M"/>
    <property type="match status" value="1"/>
</dbReference>
<dbReference type="PANTHER" id="PTHR37524:SF2">
    <property type="entry name" value="RIBOSOMAL RNA METHYLTRANSFERASE FTSJ DOMAIN-CONTAINING PROTEIN"/>
    <property type="match status" value="1"/>
</dbReference>
<dbReference type="Pfam" id="PF01728">
    <property type="entry name" value="FtsJ"/>
    <property type="match status" value="1"/>
</dbReference>
<dbReference type="Pfam" id="PF18125">
    <property type="entry name" value="RlmM_FDX"/>
    <property type="match status" value="1"/>
</dbReference>
<dbReference type="Pfam" id="PF21239">
    <property type="entry name" value="RLMM_N"/>
    <property type="match status" value="1"/>
</dbReference>
<dbReference type="PIRSF" id="PIRSF028774">
    <property type="entry name" value="UCP028774"/>
    <property type="match status" value="1"/>
</dbReference>
<dbReference type="SUPFAM" id="SSF53335">
    <property type="entry name" value="S-adenosyl-L-methionine-dependent methyltransferases"/>
    <property type="match status" value="1"/>
</dbReference>
<reference key="1">
    <citation type="submission" date="2008-01" db="EMBL/GenBank/DDBJ databases">
        <title>Complete sequence of Shewanella halifaxensis HAW-EB4.</title>
        <authorList>
            <consortium name="US DOE Joint Genome Institute"/>
            <person name="Copeland A."/>
            <person name="Lucas S."/>
            <person name="Lapidus A."/>
            <person name="Glavina del Rio T."/>
            <person name="Dalin E."/>
            <person name="Tice H."/>
            <person name="Bruce D."/>
            <person name="Goodwin L."/>
            <person name="Pitluck S."/>
            <person name="Sims D."/>
            <person name="Brettin T."/>
            <person name="Detter J.C."/>
            <person name="Han C."/>
            <person name="Kuske C.R."/>
            <person name="Schmutz J."/>
            <person name="Larimer F."/>
            <person name="Land M."/>
            <person name="Hauser L."/>
            <person name="Kyrpides N."/>
            <person name="Kim E."/>
            <person name="Zhao J.-S."/>
            <person name="Richardson P."/>
        </authorList>
    </citation>
    <scope>NUCLEOTIDE SEQUENCE [LARGE SCALE GENOMIC DNA]</scope>
    <source>
        <strain>HAW-EB4</strain>
    </source>
</reference>
<sequence length="360" mass="40410">MINLFLFCRAGYEKDCAAEIQVRAAELDIGGFVKTNTNDAYVIFQCFQAGDAEVLAKNISLDSLIFARQMFAAKELLKGLPEQDRISPIVEALAQVHKAGELRVETPDTNEAKELSNFCRKFTVPLRQALKKSGALLEKENPKRPIIHVCFVASGQAYVGFSLSNNSSPYFMGIPRLKIAADAPSRSTLKLDEAFIHFIPKEEQETRLSSGMKAVDLGACPGGWTYQLVRRGMFVAAVDNGPMDQGLMDTGQVKHYQADGFRFEPPRKNITWLVCDMIEKPSRVAELIEAWAINGWFKESIFNLKLPMKARYKEVSTILATMEEILKENGVDDFSIAAKHLYHDRDEVTVHLCLRPSQPW</sequence>
<organism>
    <name type="scientific">Shewanella halifaxensis (strain HAW-EB4)</name>
    <dbReference type="NCBI Taxonomy" id="458817"/>
    <lineage>
        <taxon>Bacteria</taxon>
        <taxon>Pseudomonadati</taxon>
        <taxon>Pseudomonadota</taxon>
        <taxon>Gammaproteobacteria</taxon>
        <taxon>Alteromonadales</taxon>
        <taxon>Shewanellaceae</taxon>
        <taxon>Shewanella</taxon>
    </lineage>
</organism>
<proteinExistence type="inferred from homology"/>
<keyword id="KW-0963">Cytoplasm</keyword>
<keyword id="KW-0489">Methyltransferase</keyword>
<keyword id="KW-0698">rRNA processing</keyword>
<keyword id="KW-0949">S-adenosyl-L-methionine</keyword>
<keyword id="KW-0808">Transferase</keyword>
<accession>B0TPH1</accession>
<comment type="function">
    <text evidence="1">Catalyzes the 2'-O-methylation at nucleotide C2498 in 23S rRNA.</text>
</comment>
<comment type="catalytic activity">
    <reaction evidence="1">
        <text>cytidine(2498) in 23S rRNA + S-adenosyl-L-methionine = 2'-O-methylcytidine(2498) in 23S rRNA + S-adenosyl-L-homocysteine + H(+)</text>
        <dbReference type="Rhea" id="RHEA:42788"/>
        <dbReference type="Rhea" id="RHEA-COMP:10244"/>
        <dbReference type="Rhea" id="RHEA-COMP:10245"/>
        <dbReference type="ChEBI" id="CHEBI:15378"/>
        <dbReference type="ChEBI" id="CHEBI:57856"/>
        <dbReference type="ChEBI" id="CHEBI:59789"/>
        <dbReference type="ChEBI" id="CHEBI:74495"/>
        <dbReference type="ChEBI" id="CHEBI:82748"/>
        <dbReference type="EC" id="2.1.1.186"/>
    </reaction>
</comment>
<comment type="subunit">
    <text evidence="1">Monomer.</text>
</comment>
<comment type="subcellular location">
    <subcellularLocation>
        <location evidence="1">Cytoplasm</location>
    </subcellularLocation>
</comment>
<comment type="similarity">
    <text evidence="1">Belongs to the class I-like SAM-binding methyltransferase superfamily. RNA methyltransferase RlmE family. RlmM subfamily.</text>
</comment>
<evidence type="ECO:0000255" key="1">
    <source>
        <dbReference type="HAMAP-Rule" id="MF_01551"/>
    </source>
</evidence>